<feature type="transit peptide" description="Mitochondrion" evidence="4">
    <location>
        <begin position="1"/>
        <end position="41"/>
    </location>
</feature>
<feature type="chain" id="PRO_0000448709" description="Mitochondrial-processing peptidase subunit beta">
    <location>
        <begin position="42"/>
        <end position="458"/>
    </location>
</feature>
<feature type="active site" description="Proton acceptor" evidence="5">
    <location>
        <position position="76"/>
    </location>
</feature>
<feature type="binding site" evidence="5">
    <location>
        <position position="73"/>
    </location>
    <ligand>
        <name>Zn(2+)</name>
        <dbReference type="ChEBI" id="CHEBI:29105"/>
    </ligand>
</feature>
<feature type="binding site" evidence="5">
    <location>
        <position position="77"/>
    </location>
    <ligand>
        <name>Zn(2+)</name>
        <dbReference type="ChEBI" id="CHEBI:29105"/>
    </ligand>
</feature>
<feature type="binding site" evidence="5">
    <location>
        <position position="153"/>
    </location>
    <ligand>
        <name>Zn(2+)</name>
        <dbReference type="ChEBI" id="CHEBI:29105"/>
    </ligand>
</feature>
<feature type="site" description="Required for the specific determination of the substrate cleavage site" evidence="3">
    <location>
        <position position="163"/>
    </location>
</feature>
<feature type="site" description="Required for the specific determination of the substrate cleavage site" evidence="3">
    <location>
        <position position="167"/>
    </location>
</feature>
<reference evidence="11" key="1">
    <citation type="journal article" date="1998" name="Science">
        <title>Genome sequence of the nematode C. elegans: a platform for investigating biology.</title>
        <authorList>
            <consortium name="The C. elegans sequencing consortium"/>
        </authorList>
    </citation>
    <scope>NUCLEOTIDE SEQUENCE [LARGE SCALE GENOMIC DNA]</scope>
    <source>
        <strain evidence="11">Bristol N2</strain>
    </source>
</reference>
<reference evidence="9" key="2">
    <citation type="journal article" date="2006" name="J. Biochem.">
        <title>Identification and reverse genetic analysis of mitochondrial processing peptidase and the core protein of the cytochrome bc1 complex of Caenorhabditis elegans, a model parasitic nematode.</title>
        <authorList>
            <person name="Nomura H."/>
            <person name="Athauda S.B."/>
            <person name="Wada H."/>
            <person name="Maruyama Y."/>
            <person name="Takahashi K."/>
            <person name="Inoue H."/>
        </authorList>
    </citation>
    <scope>FUNCTION</scope>
    <scope>CATALYTIC ACTIVITY</scope>
    <scope>ACTIVITY REGULATION</scope>
    <scope>IDENTIFICATION IN COMPLEX WITH MPPA-1</scope>
    <scope>DISRUPTION PHENOTYPE</scope>
</reference>
<sequence length="458" mass="51156">MYRRLASGLYQTSQRRIAQVQPKSVFVPETIVTTLPNGFRVATENTGGSTATIGVFIDAGSRYENEKNNGTAHFLEHMAFKGTPRRTRMGLELEVENIGAHLNAYTSRESTTYYAKCFTEKLDQSVDILSDILLNSSLATKDIEAERGVIIREMEEVAQNFQEVVFDILHADVFKGNPLSYTILGPIELIQTINKNDLQGYINTHYRSGRMVLAAAGGVNHDAIVKMAEKYFGELKHGDSSTEFVPATYSPCEVRGDIPDLPMLYGAMVVEGVSWTHEDNLALMVANTLMGEYDRMRGFGVNAPTRLAEKLSQDAGIEVFQSFNTCYKETGLVGTYFVAAPESIDNLIDSVLQQWVWLANNIDEAAVDRAKRSLHTNLLLMLDGSTPVCEDIGRQLLCYGRRIPTPELHARIESITVQQLRDVCRRVFLEGQVSAAVVGKTQYWPVNEEIHGRLIRMQ</sequence>
<gene>
    <name evidence="8 12" type="primary">mppb-1</name>
    <name evidence="12" type="ORF">ZC410.2</name>
</gene>
<organism evidence="11">
    <name type="scientific">Caenorhabditis elegans</name>
    <dbReference type="NCBI Taxonomy" id="6239"/>
    <lineage>
        <taxon>Eukaryota</taxon>
        <taxon>Metazoa</taxon>
        <taxon>Ecdysozoa</taxon>
        <taxon>Nematoda</taxon>
        <taxon>Chromadorea</taxon>
        <taxon>Rhabditida</taxon>
        <taxon>Rhabditina</taxon>
        <taxon>Rhabditomorpha</taxon>
        <taxon>Rhabditoidea</taxon>
        <taxon>Rhabditidae</taxon>
        <taxon>Peloderinae</taxon>
        <taxon>Caenorhabditis</taxon>
    </lineage>
</organism>
<proteinExistence type="evidence at protein level"/>
<accession>Q23295</accession>
<keyword id="KW-0378">Hydrolase</keyword>
<keyword id="KW-0479">Metal-binding</keyword>
<keyword id="KW-0482">Metalloprotease</keyword>
<keyword id="KW-0496">Mitochondrion</keyword>
<keyword id="KW-0645">Protease</keyword>
<keyword id="KW-1185">Reference proteome</keyword>
<keyword id="KW-0809">Transit peptide</keyword>
<keyword id="KW-0862">Zinc</keyword>
<name>MPPB_CAEEL</name>
<evidence type="ECO:0000250" key="1">
    <source>
        <dbReference type="UniProtKB" id="O75439"/>
    </source>
</evidence>
<evidence type="ECO:0000250" key="2">
    <source>
        <dbReference type="UniProtKB" id="P10507"/>
    </source>
</evidence>
<evidence type="ECO:0000250" key="3">
    <source>
        <dbReference type="UniProtKB" id="Q03346"/>
    </source>
</evidence>
<evidence type="ECO:0000255" key="4"/>
<evidence type="ECO:0000255" key="5">
    <source>
        <dbReference type="PROSITE-ProRule" id="PRU10096"/>
    </source>
</evidence>
<evidence type="ECO:0000255" key="6">
    <source>
        <dbReference type="RuleBase" id="RU004447"/>
    </source>
</evidence>
<evidence type="ECO:0000269" key="7">
    <source>
    </source>
</evidence>
<evidence type="ECO:0000303" key="8">
    <source>
    </source>
</evidence>
<evidence type="ECO:0000305" key="9"/>
<evidence type="ECO:0000305" key="10">
    <source>
    </source>
</evidence>
<evidence type="ECO:0000312" key="11">
    <source>
        <dbReference type="Proteomes" id="UP000001940"/>
    </source>
</evidence>
<evidence type="ECO:0000312" key="12">
    <source>
        <dbReference type="WormBase" id="ZC410.2"/>
    </source>
</evidence>
<comment type="function">
    <text evidence="10">Catalytic subunit of the essential mitochondrial processing protease (MPP), which cleaves the mitochondrial sequence off newly imported precursors proteins (Probable). Preferentially, cleaves after an arginine at position P2 (Probable).</text>
</comment>
<comment type="catalytic activity">
    <reaction evidence="7">
        <text>Release of N-terminal transit peptides from precursor proteins imported into the mitochondrion, typically with Arg in position P2.</text>
        <dbReference type="EC" id="3.4.24.64"/>
    </reaction>
</comment>
<comment type="cofactor">
    <cofactor evidence="2">
        <name>Zn(2+)</name>
        <dbReference type="ChEBI" id="CHEBI:29105"/>
    </cofactor>
    <text evidence="2">Binds 1 zinc ion per subunit.</text>
</comment>
<comment type="activity regulation">
    <text evidence="7">Binding to mppa-1 is required for catalytic activity (PubMed:16788047). Inhibited by metal chelator ethylenediaminetetraacetic acid (EDTA) (PubMed:16788047).</text>
</comment>
<comment type="subunit">
    <text evidence="10">Heterodimer of mppa-1 (alpha) and mppb-1 (beta) subunits, forming the mitochondrial processing protease (MPP) in which mppa-1 is involved in substrate recognition and binding and mppb-1 is the catalytic subunit.</text>
</comment>
<comment type="subcellular location">
    <subcellularLocation>
        <location evidence="1">Mitochondrion matrix</location>
    </subcellularLocation>
</comment>
<comment type="disruption phenotype">
    <text evidence="7">RNAi-mediated knockdown causes 54 percent embryonic lethality (PubMed:16788047). Embryonic lethality is further increased in simultaneous RNAi-mediated knockdown of mmpa-1 and mmpb-1 or ucr-1 and mppb-1 (PubMed:16788047).</text>
</comment>
<comment type="similarity">
    <text evidence="6">Belongs to the peptidase M16 family.</text>
</comment>
<dbReference type="EC" id="3.4.24.64" evidence="7"/>
<dbReference type="EMBL" id="BX284604">
    <property type="protein sequence ID" value="CAA92566.2"/>
    <property type="molecule type" value="Genomic_DNA"/>
</dbReference>
<dbReference type="PIR" id="T27548">
    <property type="entry name" value="T27548"/>
</dbReference>
<dbReference type="RefSeq" id="NP_501576.2">
    <property type="nucleotide sequence ID" value="NM_069175.9"/>
</dbReference>
<dbReference type="SMR" id="Q23295"/>
<dbReference type="FunCoup" id="Q23295">
    <property type="interactions" value="2738"/>
</dbReference>
<dbReference type="STRING" id="6239.ZC410.2.1"/>
<dbReference type="MEROPS" id="M16.980"/>
<dbReference type="PaxDb" id="6239-ZC410.2"/>
<dbReference type="PeptideAtlas" id="Q23295"/>
<dbReference type="EnsemblMetazoa" id="ZC410.2.1">
    <property type="protein sequence ID" value="ZC410.2.1"/>
    <property type="gene ID" value="WBGene00013880"/>
</dbReference>
<dbReference type="GeneID" id="177725"/>
<dbReference type="KEGG" id="cel:CELE_ZC410.2"/>
<dbReference type="UCSC" id="ZC410.2.1">
    <property type="organism name" value="c. elegans"/>
</dbReference>
<dbReference type="AGR" id="WB:WBGene00013880"/>
<dbReference type="CTD" id="177725"/>
<dbReference type="WormBase" id="ZC410.2">
    <property type="protein sequence ID" value="CE35701"/>
    <property type="gene ID" value="WBGene00013880"/>
    <property type="gene designation" value="mppb-1"/>
</dbReference>
<dbReference type="eggNOG" id="KOG0960">
    <property type="taxonomic scope" value="Eukaryota"/>
</dbReference>
<dbReference type="GeneTree" id="ENSGT00940000156608"/>
<dbReference type="HOGENOM" id="CLU_009902_4_2_1"/>
<dbReference type="InParanoid" id="Q23295"/>
<dbReference type="OMA" id="IDVVCDM"/>
<dbReference type="OrthoDB" id="10251424at2759"/>
<dbReference type="PhylomeDB" id="Q23295"/>
<dbReference type="Reactome" id="R-CEL-611105">
    <property type="pathway name" value="Respiratory electron transport"/>
</dbReference>
<dbReference type="Reactome" id="R-CEL-8949664">
    <property type="pathway name" value="Processing of SMDT1"/>
</dbReference>
<dbReference type="Reactome" id="R-CEL-9865881">
    <property type="pathway name" value="Complex III assembly"/>
</dbReference>
<dbReference type="PRO" id="PR:Q23295"/>
<dbReference type="Proteomes" id="UP000001940">
    <property type="component" value="Chromosome IV"/>
</dbReference>
<dbReference type="Bgee" id="WBGene00013880">
    <property type="expression patterns" value="Expressed in germ line (C elegans) and 4 other cell types or tissues"/>
</dbReference>
<dbReference type="GO" id="GO:0017087">
    <property type="term" value="C:mitochondrial processing peptidase complex"/>
    <property type="evidence" value="ECO:0000314"/>
    <property type="project" value="WormBase"/>
</dbReference>
<dbReference type="GO" id="GO:0005739">
    <property type="term" value="C:mitochondrion"/>
    <property type="evidence" value="ECO:0000318"/>
    <property type="project" value="GO_Central"/>
</dbReference>
<dbReference type="GO" id="GO:0046872">
    <property type="term" value="F:metal ion binding"/>
    <property type="evidence" value="ECO:0007669"/>
    <property type="project" value="UniProtKB-KW"/>
</dbReference>
<dbReference type="GO" id="GO:0004222">
    <property type="term" value="F:metalloendopeptidase activity"/>
    <property type="evidence" value="ECO:0007669"/>
    <property type="project" value="UniProtKB-EC"/>
</dbReference>
<dbReference type="GO" id="GO:0006627">
    <property type="term" value="P:protein processing involved in protein targeting to mitochondrion"/>
    <property type="evidence" value="ECO:0000318"/>
    <property type="project" value="GO_Central"/>
</dbReference>
<dbReference type="GO" id="GO:0006508">
    <property type="term" value="P:proteolysis"/>
    <property type="evidence" value="ECO:0000314"/>
    <property type="project" value="WormBase"/>
</dbReference>
<dbReference type="FunFam" id="3.30.830.10:FF:000002">
    <property type="entry name" value="Mitochondrial-processing peptidase subunit beta"/>
    <property type="match status" value="1"/>
</dbReference>
<dbReference type="FunFam" id="3.30.830.10:FF:000001">
    <property type="entry name" value="Mitochondrial-processing peptidase subunit beta, mitochondrial"/>
    <property type="match status" value="1"/>
</dbReference>
<dbReference type="Gene3D" id="3.30.830.10">
    <property type="entry name" value="Metalloenzyme, LuxS/M16 peptidase-like"/>
    <property type="match status" value="2"/>
</dbReference>
<dbReference type="InterPro" id="IPR011249">
    <property type="entry name" value="Metalloenz_LuxS/M16"/>
</dbReference>
<dbReference type="InterPro" id="IPR050361">
    <property type="entry name" value="MPP/UQCRC_Complex"/>
</dbReference>
<dbReference type="InterPro" id="IPR011765">
    <property type="entry name" value="Pept_M16_N"/>
</dbReference>
<dbReference type="InterPro" id="IPR001431">
    <property type="entry name" value="Pept_M16_Zn_BS"/>
</dbReference>
<dbReference type="InterPro" id="IPR007863">
    <property type="entry name" value="Peptidase_M16_C"/>
</dbReference>
<dbReference type="PANTHER" id="PTHR11851:SF149">
    <property type="entry name" value="GH01077P"/>
    <property type="match status" value="1"/>
</dbReference>
<dbReference type="PANTHER" id="PTHR11851">
    <property type="entry name" value="METALLOPROTEASE"/>
    <property type="match status" value="1"/>
</dbReference>
<dbReference type="Pfam" id="PF00675">
    <property type="entry name" value="Peptidase_M16"/>
    <property type="match status" value="1"/>
</dbReference>
<dbReference type="Pfam" id="PF05193">
    <property type="entry name" value="Peptidase_M16_C"/>
    <property type="match status" value="1"/>
</dbReference>
<dbReference type="SUPFAM" id="SSF63411">
    <property type="entry name" value="LuxS/MPP-like metallohydrolase"/>
    <property type="match status" value="2"/>
</dbReference>
<dbReference type="PROSITE" id="PS00143">
    <property type="entry name" value="INSULINASE"/>
    <property type="match status" value="1"/>
</dbReference>
<protein>
    <recommendedName>
        <fullName evidence="8">Mitochondrial-processing peptidase subunit beta</fullName>
        <ecNumber evidence="7">3.4.24.64</ecNumber>
    </recommendedName>
    <alternativeName>
        <fullName evidence="8">Beta-MPP</fullName>
    </alternativeName>
</protein>